<proteinExistence type="inferred from homology"/>
<accession>Q3AA34</accession>
<sequence length="1090" mass="124203">MLTIVRGPVGSGKSRYCREEIIKVLKEAPLGPMVLYIVPESATFENEYLLNTREDLPGSFRLQVLSFSRLALNVVREFKAFFKNSSEFVYQHTLKKILQENKGKLQILQKAADNPGFIEDLLKLFKEFRRYRVKPENLEKASSEIENWMLQQKLKDVYLLYKLYLEKFGEEYTSEGLLEKFLEYAPKSKFLAGAKVFIDGFYTFTPLELEVIKTLLKTCAEVTVTLPTEYDPGIFNRLYSEALNLGIKVKELKLEKIERYRASELLHLAQNYYPLLPDPYSGSLENLSLIAAANPLEEMEKAARIIRYLAKFKGYKLSDILVLIPEDGYYISNIKTVFNEYGLPVYVDKGLAFDHHGLYFLLKGVLGEFNREAAINCLKSGLLNLTADEVFALENYLLSRGLDGEKLVLKEAWEDPNSSYWESWEKGFGEIISFSQILPLINTYREFSQSLKQLLLKIGVPRRISDENGERFWQAFTNLLTEIEEVFGAERLNPTTFAEELLAYLAKLSLKTIPKGLDQVRAGGSKRYWTGEARAVIILGAVEGKFPSPPAAGLIFTEEERAKLKKVGLELSPLIRQRLKEDNFHVFLALTRARERVYVSYPRVSLTGESFTPALLVDWLKKAFPNLKSEEGSYGNETTPQALTRLLSREMVKVKKNGELPFIAQGAFNALLLSKPELITKIARAFATNPGKIKLNAGFKEFLPSKTLSVSRLETYYSCPLKYFLKYLIKAEEREIFTPEATEIGALLHGAVAEIIKTVREKGQKLSTLLAEDLKTLVYQAFTKAQQEYGEKFLATYRGRYFLNRLYLMLFKAIEALAYFEGFTKFTPFGEEIAFGEKERLKSPVFEVNGEKYTLAGKIDRIDVYENNGKTYLRIIDYKTGSISISLDEVVGGINLQLLTYLLVASENKELFGENLVPAGAFYFRFQNPMLDEKAEGLSMEELKEEVYKNFRLSGYALKDEESLKHLDSFYAQNNKFKTVNLRTYKDGRIDNALTPAELEALFTKIKGLITEAIFKISAGEFSAIPYQLKDATGCRYCSYLEVCRLEEQEKQYRVIPRKKDPEVLLALSGGGVGDEKLDSRTNAGYHLQG</sequence>
<name>ADDB_CARHZ</name>
<feature type="chain" id="PRO_0000379363" description="ATP-dependent helicase/deoxyribonuclease subunit B">
    <location>
        <begin position="1"/>
        <end position="1090"/>
    </location>
</feature>
<feature type="binding site" evidence="1">
    <location>
        <begin position="7"/>
        <end position="14"/>
    </location>
    <ligand>
        <name>ATP</name>
        <dbReference type="ChEBI" id="CHEBI:30616"/>
    </ligand>
</feature>
<feature type="binding site" evidence="1">
    <location>
        <position position="719"/>
    </location>
    <ligand>
        <name>[4Fe-4S] cluster</name>
        <dbReference type="ChEBI" id="CHEBI:49883"/>
    </ligand>
</feature>
<feature type="binding site" evidence="1">
    <location>
        <position position="1035"/>
    </location>
    <ligand>
        <name>[4Fe-4S] cluster</name>
        <dbReference type="ChEBI" id="CHEBI:49883"/>
    </ligand>
</feature>
<feature type="binding site" evidence="1">
    <location>
        <position position="1038"/>
    </location>
    <ligand>
        <name>[4Fe-4S] cluster</name>
        <dbReference type="ChEBI" id="CHEBI:49883"/>
    </ligand>
</feature>
<feature type="binding site" evidence="1">
    <location>
        <position position="1044"/>
    </location>
    <ligand>
        <name>[4Fe-4S] cluster</name>
        <dbReference type="ChEBI" id="CHEBI:49883"/>
    </ligand>
</feature>
<comment type="function">
    <text evidence="1">The heterodimer acts as both an ATP-dependent DNA helicase and an ATP-dependent, dual-direction single-stranded exonuclease. Recognizes the chi site generating a DNA molecule suitable for the initiation of homologous recombination. The AddB subunit has 5' -&gt; 3' nuclease activity but not helicase activity.</text>
</comment>
<comment type="cofactor">
    <cofactor evidence="1">
        <name>Mg(2+)</name>
        <dbReference type="ChEBI" id="CHEBI:18420"/>
    </cofactor>
</comment>
<comment type="cofactor">
    <cofactor evidence="1">
        <name>[4Fe-4S] cluster</name>
        <dbReference type="ChEBI" id="CHEBI:49883"/>
    </cofactor>
    <text evidence="1">Binds 1 [4Fe-4S] cluster.</text>
</comment>
<comment type="subunit">
    <text evidence="1">Heterodimer of AddA and AddB.</text>
</comment>
<comment type="miscellaneous">
    <text evidence="1">Despite having conserved helicase domains, this subunit does not have helicase activity.</text>
</comment>
<comment type="similarity">
    <text evidence="1 3">Belongs to the helicase family. AddB/RexB type 1 subfamily.</text>
</comment>
<gene>
    <name evidence="1" type="primary">addB</name>
    <name evidence="2" type="synonym">rexB</name>
    <name type="ordered locus">CHY_2187</name>
</gene>
<protein>
    <recommendedName>
        <fullName evidence="3">ATP-dependent helicase/deoxyribonuclease subunit B</fullName>
        <ecNumber evidence="1">3.1.-.-</ecNumber>
    </recommendedName>
    <alternativeName>
        <fullName evidence="1">ATP-dependent helicase/nuclease subunit AddB</fullName>
    </alternativeName>
</protein>
<organism>
    <name type="scientific">Carboxydothermus hydrogenoformans (strain ATCC BAA-161 / DSM 6008 / Z-2901)</name>
    <dbReference type="NCBI Taxonomy" id="246194"/>
    <lineage>
        <taxon>Bacteria</taxon>
        <taxon>Bacillati</taxon>
        <taxon>Bacillota</taxon>
        <taxon>Clostridia</taxon>
        <taxon>Thermoanaerobacterales</taxon>
        <taxon>Thermoanaerobacteraceae</taxon>
        <taxon>Carboxydothermus</taxon>
    </lineage>
</organism>
<evidence type="ECO:0000250" key="1">
    <source>
        <dbReference type="UniProtKB" id="P23477"/>
    </source>
</evidence>
<evidence type="ECO:0000303" key="2">
    <source>
    </source>
</evidence>
<evidence type="ECO:0000305" key="3"/>
<reference key="1">
    <citation type="journal article" date="2005" name="PLoS Genet.">
        <title>Life in hot carbon monoxide: the complete genome sequence of Carboxydothermus hydrogenoformans Z-2901.</title>
        <authorList>
            <person name="Wu M."/>
            <person name="Ren Q."/>
            <person name="Durkin A.S."/>
            <person name="Daugherty S.C."/>
            <person name="Brinkac L.M."/>
            <person name="Dodson R.J."/>
            <person name="Madupu R."/>
            <person name="Sullivan S.A."/>
            <person name="Kolonay J.F."/>
            <person name="Nelson W.C."/>
            <person name="Tallon L.J."/>
            <person name="Jones K.M."/>
            <person name="Ulrich L.E."/>
            <person name="Gonzalez J.M."/>
            <person name="Zhulin I.B."/>
            <person name="Robb F.T."/>
            <person name="Eisen J.A."/>
        </authorList>
    </citation>
    <scope>NUCLEOTIDE SEQUENCE [LARGE SCALE GENOMIC DNA]</scope>
    <source>
        <strain>ATCC BAA-161 / DSM 6008 / Z-2901</strain>
    </source>
</reference>
<dbReference type="EC" id="3.1.-.-" evidence="1"/>
<dbReference type="EMBL" id="CP000141">
    <property type="protein sequence ID" value="ABB14962.1"/>
    <property type="molecule type" value="Genomic_DNA"/>
</dbReference>
<dbReference type="RefSeq" id="WP_011345073.1">
    <property type="nucleotide sequence ID" value="NC_007503.1"/>
</dbReference>
<dbReference type="SMR" id="Q3AA34"/>
<dbReference type="FunCoup" id="Q3AA34">
    <property type="interactions" value="7"/>
</dbReference>
<dbReference type="STRING" id="246194.CHY_2187"/>
<dbReference type="KEGG" id="chy:CHY_2187"/>
<dbReference type="eggNOG" id="COG3857">
    <property type="taxonomic scope" value="Bacteria"/>
</dbReference>
<dbReference type="HOGENOM" id="CLU_007838_0_0_9"/>
<dbReference type="InParanoid" id="Q3AA34"/>
<dbReference type="Proteomes" id="UP000002706">
    <property type="component" value="Chromosome"/>
</dbReference>
<dbReference type="GO" id="GO:0051539">
    <property type="term" value="F:4 iron, 4 sulfur cluster binding"/>
    <property type="evidence" value="ECO:0007669"/>
    <property type="project" value="UniProtKB-KW"/>
</dbReference>
<dbReference type="GO" id="GO:0005524">
    <property type="term" value="F:ATP binding"/>
    <property type="evidence" value="ECO:0007669"/>
    <property type="project" value="UniProtKB-KW"/>
</dbReference>
<dbReference type="GO" id="GO:0003677">
    <property type="term" value="F:DNA binding"/>
    <property type="evidence" value="ECO:0007669"/>
    <property type="project" value="UniProtKB-KW"/>
</dbReference>
<dbReference type="GO" id="GO:0004527">
    <property type="term" value="F:exonuclease activity"/>
    <property type="evidence" value="ECO:0007669"/>
    <property type="project" value="UniProtKB-KW"/>
</dbReference>
<dbReference type="GO" id="GO:0004386">
    <property type="term" value="F:helicase activity"/>
    <property type="evidence" value="ECO:0007669"/>
    <property type="project" value="UniProtKB-KW"/>
</dbReference>
<dbReference type="GO" id="GO:0046872">
    <property type="term" value="F:metal ion binding"/>
    <property type="evidence" value="ECO:0007669"/>
    <property type="project" value="UniProtKB-KW"/>
</dbReference>
<dbReference type="GO" id="GO:0006310">
    <property type="term" value="P:DNA recombination"/>
    <property type="evidence" value="ECO:0007669"/>
    <property type="project" value="TreeGrafter"/>
</dbReference>
<dbReference type="GO" id="GO:0006281">
    <property type="term" value="P:DNA repair"/>
    <property type="evidence" value="ECO:0007669"/>
    <property type="project" value="UniProtKB-KW"/>
</dbReference>
<dbReference type="Gene3D" id="3.90.320.10">
    <property type="match status" value="1"/>
</dbReference>
<dbReference type="Gene3D" id="3.40.50.300">
    <property type="entry name" value="P-loop containing nucleotide triphosphate hydrolases"/>
    <property type="match status" value="4"/>
</dbReference>
<dbReference type="InterPro" id="IPR049035">
    <property type="entry name" value="ADDB_N"/>
</dbReference>
<dbReference type="InterPro" id="IPR027417">
    <property type="entry name" value="P-loop_NTPase"/>
</dbReference>
<dbReference type="InterPro" id="IPR011604">
    <property type="entry name" value="PDDEXK-like_dom_sf"/>
</dbReference>
<dbReference type="InterPro" id="IPR038726">
    <property type="entry name" value="PDDEXK_AddAB-type"/>
</dbReference>
<dbReference type="PANTHER" id="PTHR30591">
    <property type="entry name" value="RECBCD ENZYME SUBUNIT RECC"/>
    <property type="match status" value="1"/>
</dbReference>
<dbReference type="PANTHER" id="PTHR30591:SF1">
    <property type="entry name" value="RECBCD ENZYME SUBUNIT RECC"/>
    <property type="match status" value="1"/>
</dbReference>
<dbReference type="Pfam" id="PF21445">
    <property type="entry name" value="ADDB_N"/>
    <property type="match status" value="1"/>
</dbReference>
<dbReference type="Pfam" id="PF12705">
    <property type="entry name" value="PDDEXK_1"/>
    <property type="match status" value="1"/>
</dbReference>
<dbReference type="SUPFAM" id="SSF52540">
    <property type="entry name" value="P-loop containing nucleoside triphosphate hydrolases"/>
    <property type="match status" value="1"/>
</dbReference>
<keyword id="KW-0004">4Fe-4S</keyword>
<keyword id="KW-0067">ATP-binding</keyword>
<keyword id="KW-0227">DNA damage</keyword>
<keyword id="KW-0234">DNA repair</keyword>
<keyword id="KW-0238">DNA-binding</keyword>
<keyword id="KW-0269">Exonuclease</keyword>
<keyword id="KW-0347">Helicase</keyword>
<keyword id="KW-0378">Hydrolase</keyword>
<keyword id="KW-0408">Iron</keyword>
<keyword id="KW-0411">Iron-sulfur</keyword>
<keyword id="KW-0479">Metal-binding</keyword>
<keyword id="KW-0540">Nuclease</keyword>
<keyword id="KW-0547">Nucleotide-binding</keyword>
<keyword id="KW-1185">Reference proteome</keyword>